<reference key="1">
    <citation type="journal article" date="2003" name="Mol. Microbiol.">
        <title>An integrated analysis of the genome of the hyperthermophilic archaeon Pyrococcus abyssi.</title>
        <authorList>
            <person name="Cohen G.N."/>
            <person name="Barbe V."/>
            <person name="Flament D."/>
            <person name="Galperin M."/>
            <person name="Heilig R."/>
            <person name="Lecompte O."/>
            <person name="Poch O."/>
            <person name="Prieur D."/>
            <person name="Querellou J."/>
            <person name="Ripp R."/>
            <person name="Thierry J.-C."/>
            <person name="Van der Oost J."/>
            <person name="Weissenbach J."/>
            <person name="Zivanovic Y."/>
            <person name="Forterre P."/>
        </authorList>
    </citation>
    <scope>NUCLEOTIDE SEQUENCE [LARGE SCALE GENOMIC DNA]</scope>
    <source>
        <strain>GE5 / Orsay</strain>
    </source>
</reference>
<reference key="2">
    <citation type="journal article" date="2012" name="Curr. Microbiol.">
        <title>Re-annotation of two hyperthermophilic archaea Pyrococcus abyssi GE5 and Pyrococcus furiosus DSM 3638.</title>
        <authorList>
            <person name="Gao J."/>
            <person name="Wang J."/>
        </authorList>
    </citation>
    <scope>GENOME REANNOTATION</scope>
    <source>
        <strain>GE5 / Orsay</strain>
    </source>
</reference>
<reference key="3">
    <citation type="journal article" date="2010" name="J. Biol. Chem.">
        <title>Euryarchaeal beta-CASP proteins with homology to bacterial RNase J have 5'- to 3'-exoribonuclease activity.</title>
        <authorList>
            <person name="Clouet-d'Orval B."/>
            <person name="Rinaldi D."/>
            <person name="Quentin Y."/>
            <person name="Carpousis A.J."/>
        </authorList>
    </citation>
    <scope>FUNCTION</scope>
    <scope>COFACTOR</scope>
    <scope>ACTIVITY REGULATION</scope>
    <scope>BIOPHYSICOCHEMICAL PROPERTIES</scope>
    <scope>MUTAGENESIS OF 47-HIS--LEU-60; HIS-86; GLU-209; 298-ARG--LEU-307; HIS-388 AND HIS-410</scope>
</reference>
<evidence type="ECO:0000255" key="1">
    <source>
        <dbReference type="HAMAP-Rule" id="MF_01492"/>
    </source>
</evidence>
<evidence type="ECO:0000269" key="2">
    <source>
    </source>
</evidence>
<evidence type="ECO:0000305" key="3"/>
<sequence>MWEEINMIKIYTLGGYEEVGKNMTAVEYNGEVVIVDMGIRLDRVLIHEDVEFQKMSSKDLRKLGAIPDDRPIRNKKVVAIALSHGHLDHIGAVGKLAPHYPDVPIYGTPYTIRLAKSEIKGEEYFEVTNPLYETNYGEIVQVSENLAIEFVQITHSIPQSSIVVIHTPEGAVVYACDYKFDNNHPYGERPDYKRLKELGKEGVKVLIAESTRVAEETKTPSEAVAKMLLEDFFLYEGMEADGLIATTFASHIARLQELIEIANKMGRQAIFIGRSLAKYTGIAKQLGLIKMKGSRVLRSPNAVSKVLKEVSQARENYLLIVTGHQGEPGAILTRMANGELYDIGPRDTVVFSAGVIPNPLNVAQRYALETKLRMKGVRMIKNLHVSGHASKEDHRYLIRMLNPEYIVPAHGEFRMLTHYAELAEEEGYMIGKEVFISRNGHVVEIPGSLEG</sequence>
<gene>
    <name evidence="1" type="primary">rnj</name>
    <name type="ordered locus">PYRAB09150</name>
    <name type="ORF">PAB1751</name>
</gene>
<keyword id="KW-0963">Cytoplasm</keyword>
<keyword id="KW-0269">Exonuclease</keyword>
<keyword id="KW-0378">Hydrolase</keyword>
<keyword id="KW-0479">Metal-binding</keyword>
<keyword id="KW-0540">Nuclease</keyword>
<keyword id="KW-0694">RNA-binding</keyword>
<keyword id="KW-0862">Zinc</keyword>
<protein>
    <recommendedName>
        <fullName evidence="1">Ribonuclease J</fullName>
        <shortName evidence="1">RNase J</shortName>
        <ecNumber evidence="1">3.1.-.-</ecNumber>
    </recommendedName>
    <alternativeName>
        <fullName>Pab-RNase J</fullName>
    </alternativeName>
</protein>
<comment type="function">
    <text evidence="2">A highly processive 5'-3' exoribonuclease; no evidence has been seen for endonuclease activity. Prefers 5'-phosphate or 5'-hydroxyl ends; 5'-triphosphate substrates are very poorly degraded, does not degrade circular RNA. Does not degrade pre-tRNA(Trp) suggesting it is inhibited by strong secondary structures. Also degrades ssNDA but not dsDNA.</text>
</comment>
<comment type="cofactor">
    <cofactor evidence="1">
        <name>Zn(2+)</name>
        <dbReference type="ChEBI" id="CHEBI:29105"/>
    </cofactor>
    <text evidence="1">Binds 2 Zn(2+) ions per subunit. It is not clear if Zn(2+) or Mg(2+) is physiologically important.</text>
</comment>
<comment type="activity regulation">
    <text evidence="2">Inhibited by 1,10-phenanthroline.</text>
</comment>
<comment type="biophysicochemical properties">
    <phDependence>
        <text evidence="2">Optimum pH is 6-8.</text>
    </phDependence>
    <temperatureDependence>
        <text evidence="2">Optimum temperature is 95 degrees Celsius.</text>
    </temperatureDependence>
</comment>
<comment type="subunit">
    <text evidence="1">Homodimer.</text>
</comment>
<comment type="subcellular location">
    <subcellularLocation>
        <location evidence="1">Cytoplasm</location>
    </subcellularLocation>
</comment>
<comment type="miscellaneous">
    <text>Mutagenesis of His-410 to Val in the T.kodakaraensis homolog (AC Q5JH57) reduces exoribonuclease activity to 1%.</text>
</comment>
<comment type="similarity">
    <text evidence="1">Belongs to the metallo-beta-lactamase superfamily. RNA-metabolizing metallo-beta-lactamase-like family. Archaeal RNase J subfamily.</text>
</comment>
<comment type="sequence caution" evidence="3">
    <conflict type="erroneous initiation">
        <sequence resource="EMBL-CDS" id="CCE70323"/>
    </conflict>
    <text>Truncated N-terminus.</text>
</comment>
<accession>Q9V076</accession>
<accession>G8ZI82</accession>
<organism>
    <name type="scientific">Pyrococcus abyssi (strain GE5 / Orsay)</name>
    <dbReference type="NCBI Taxonomy" id="272844"/>
    <lineage>
        <taxon>Archaea</taxon>
        <taxon>Methanobacteriati</taxon>
        <taxon>Methanobacteriota</taxon>
        <taxon>Thermococci</taxon>
        <taxon>Thermococcales</taxon>
        <taxon>Thermococcaceae</taxon>
        <taxon>Pyrococcus</taxon>
    </lineage>
</organism>
<name>RNJ_PYRAB</name>
<proteinExistence type="evidence at protein level"/>
<feature type="chain" id="PRO_0000429576" description="Ribonuclease J">
    <location>
        <begin position="1"/>
        <end position="451"/>
    </location>
</feature>
<feature type="binding site" evidence="1">
    <location>
        <position position="84"/>
    </location>
    <ligand>
        <name>Zn(2+)</name>
        <dbReference type="ChEBI" id="CHEBI:29105"/>
        <label>1</label>
        <note>catalytic</note>
    </ligand>
</feature>
<feature type="binding site" evidence="1">
    <location>
        <position position="86"/>
    </location>
    <ligand>
        <name>Zn(2+)</name>
        <dbReference type="ChEBI" id="CHEBI:29105"/>
        <label>1</label>
        <note>catalytic</note>
    </ligand>
</feature>
<feature type="binding site" evidence="1">
    <location>
        <position position="88"/>
    </location>
    <ligand>
        <name>Zn(2+)</name>
        <dbReference type="ChEBI" id="CHEBI:29105"/>
        <label>2</label>
        <note>catalytic</note>
    </ligand>
</feature>
<feature type="binding site" evidence="1">
    <location>
        <position position="89"/>
    </location>
    <ligand>
        <name>Zn(2+)</name>
        <dbReference type="ChEBI" id="CHEBI:29105"/>
        <label>2</label>
        <note>catalytic</note>
    </ligand>
</feature>
<feature type="binding site" evidence="1">
    <location>
        <position position="155"/>
    </location>
    <ligand>
        <name>Zn(2+)</name>
        <dbReference type="ChEBI" id="CHEBI:29105"/>
        <label>1</label>
        <note>catalytic</note>
    </ligand>
</feature>
<feature type="binding site" evidence="1">
    <location>
        <position position="177"/>
    </location>
    <ligand>
        <name>Zn(2+)</name>
        <dbReference type="ChEBI" id="CHEBI:29105"/>
        <label>1</label>
        <note>catalytic</note>
    </ligand>
</feature>
<feature type="binding site" evidence="1">
    <location>
        <position position="177"/>
    </location>
    <ligand>
        <name>Zn(2+)</name>
        <dbReference type="ChEBI" id="CHEBI:29105"/>
        <label>2</label>
        <note>catalytic</note>
    </ligand>
</feature>
<feature type="binding site" evidence="1">
    <location>
        <begin position="384"/>
        <end position="388"/>
    </location>
    <ligand>
        <name>substrate</name>
    </ligand>
</feature>
<feature type="binding site" evidence="1">
    <location>
        <position position="410"/>
    </location>
    <ligand>
        <name>Zn(2+)</name>
        <dbReference type="ChEBI" id="CHEBI:29105"/>
        <label>2</label>
        <note>catalytic</note>
    </ligand>
</feature>
<feature type="mutagenesis site" description="25% exoribonuclease activity." evidence="2">
    <location>
        <begin position="47"/>
        <end position="60"/>
    </location>
</feature>
<feature type="mutagenesis site" description="5% exoribonuclease activity." evidence="2">
    <original>H</original>
    <variation>A</variation>
    <location>
        <position position="86"/>
    </location>
</feature>
<feature type="mutagenesis site" description="5% exoribonuclease activity." evidence="2">
    <original>E</original>
    <variation>A</variation>
    <location>
        <position position="209"/>
    </location>
</feature>
<feature type="mutagenesis site" description="8% exoribonuclease activity." evidence="2">
    <location>
        <begin position="298"/>
        <end position="307"/>
    </location>
</feature>
<feature type="mutagenesis site" description="1% exoribonuclease activity." evidence="2">
    <original>H</original>
    <variation>A</variation>
    <location>
        <position position="388"/>
    </location>
</feature>
<feature type="mutagenesis site" description="Wild-type." evidence="2">
    <original>H</original>
    <variation>A</variation>
    <location>
        <position position="410"/>
    </location>
</feature>
<dbReference type="EC" id="3.1.-.-" evidence="1"/>
<dbReference type="EMBL" id="AJ248285">
    <property type="protein sequence ID" value="CAB49829.1"/>
    <property type="molecule type" value="Genomic_DNA"/>
</dbReference>
<dbReference type="EMBL" id="HE613800">
    <property type="protein sequence ID" value="CCE70323.1"/>
    <property type="status" value="ALT_INIT"/>
    <property type="molecule type" value="Genomic_DNA"/>
</dbReference>
<dbReference type="PIR" id="D75139">
    <property type="entry name" value="D75139"/>
</dbReference>
<dbReference type="RefSeq" id="WP_048146740.1">
    <property type="nucleotide sequence ID" value="NC_000868.1"/>
</dbReference>
<dbReference type="SMR" id="Q9V076"/>
<dbReference type="STRING" id="272844.PAB1751"/>
<dbReference type="KEGG" id="pab:PAB1751"/>
<dbReference type="PATRIC" id="fig|272844.11.peg.969"/>
<dbReference type="eggNOG" id="arCOG00546">
    <property type="taxonomic scope" value="Archaea"/>
</dbReference>
<dbReference type="HOGENOM" id="CLU_008727_4_1_2"/>
<dbReference type="OrthoDB" id="63419at2157"/>
<dbReference type="PhylomeDB" id="Q9V076"/>
<dbReference type="BRENDA" id="3.1.13.B1">
    <property type="organism ID" value="5242"/>
</dbReference>
<dbReference type="Proteomes" id="UP000000810">
    <property type="component" value="Chromosome"/>
</dbReference>
<dbReference type="Proteomes" id="UP000009139">
    <property type="component" value="Chromosome"/>
</dbReference>
<dbReference type="GO" id="GO:0005737">
    <property type="term" value="C:cytoplasm"/>
    <property type="evidence" value="ECO:0007669"/>
    <property type="project" value="UniProtKB-SubCell"/>
</dbReference>
<dbReference type="GO" id="GO:0004534">
    <property type="term" value="F:5'-3' RNA exonuclease activity"/>
    <property type="evidence" value="ECO:0000314"/>
    <property type="project" value="UniProtKB"/>
</dbReference>
<dbReference type="GO" id="GO:0003723">
    <property type="term" value="F:RNA binding"/>
    <property type="evidence" value="ECO:0007669"/>
    <property type="project" value="UniProtKB-KW"/>
</dbReference>
<dbReference type="GO" id="GO:0008270">
    <property type="term" value="F:zinc ion binding"/>
    <property type="evidence" value="ECO:0007669"/>
    <property type="project" value="UniProtKB-UniRule"/>
</dbReference>
<dbReference type="GO" id="GO:0006401">
    <property type="term" value="P:RNA catabolic process"/>
    <property type="evidence" value="ECO:0000314"/>
    <property type="project" value="UniProtKB"/>
</dbReference>
<dbReference type="CDD" id="cd07714">
    <property type="entry name" value="RNaseJ_MBL-fold"/>
    <property type="match status" value="1"/>
</dbReference>
<dbReference type="FunFam" id="3.40.50.10710:FF:000005">
    <property type="entry name" value="Ribonuclease J"/>
    <property type="match status" value="1"/>
</dbReference>
<dbReference type="Gene3D" id="3.40.50.10710">
    <property type="entry name" value="Metallo-hydrolase/oxidoreductase"/>
    <property type="match status" value="1"/>
</dbReference>
<dbReference type="Gene3D" id="3.60.15.10">
    <property type="entry name" value="Ribonuclease Z/Hydroxyacylglutathione hydrolase-like"/>
    <property type="match status" value="1"/>
</dbReference>
<dbReference type="HAMAP" id="MF_01492">
    <property type="entry name" value="RNase_J_arch"/>
    <property type="match status" value="1"/>
</dbReference>
<dbReference type="InterPro" id="IPR001279">
    <property type="entry name" value="Metallo-B-lactamas"/>
</dbReference>
<dbReference type="InterPro" id="IPR036866">
    <property type="entry name" value="RibonucZ/Hydroxyglut_hydro"/>
</dbReference>
<dbReference type="InterPro" id="IPR011108">
    <property type="entry name" value="RMMBL"/>
</dbReference>
<dbReference type="InterPro" id="IPR004613">
    <property type="entry name" value="RNase_J"/>
</dbReference>
<dbReference type="InterPro" id="IPR042173">
    <property type="entry name" value="RNase_J_2"/>
</dbReference>
<dbReference type="InterPro" id="IPR030879">
    <property type="entry name" value="RNase_J_arc"/>
</dbReference>
<dbReference type="InterPro" id="IPR055132">
    <property type="entry name" value="RNase_J_b_CASP"/>
</dbReference>
<dbReference type="InterPro" id="IPR001587">
    <property type="entry name" value="RNase_J_CS"/>
</dbReference>
<dbReference type="NCBIfam" id="TIGR00649">
    <property type="entry name" value="MG423"/>
    <property type="match status" value="1"/>
</dbReference>
<dbReference type="PANTHER" id="PTHR43694">
    <property type="entry name" value="RIBONUCLEASE J"/>
    <property type="match status" value="1"/>
</dbReference>
<dbReference type="PANTHER" id="PTHR43694:SF1">
    <property type="entry name" value="RIBONUCLEASE J"/>
    <property type="match status" value="1"/>
</dbReference>
<dbReference type="Pfam" id="PF00753">
    <property type="entry name" value="Lactamase_B"/>
    <property type="match status" value="1"/>
</dbReference>
<dbReference type="Pfam" id="PF07521">
    <property type="entry name" value="RMMBL"/>
    <property type="match status" value="1"/>
</dbReference>
<dbReference type="Pfam" id="PF22505">
    <property type="entry name" value="RNase_J_b_CASP"/>
    <property type="match status" value="1"/>
</dbReference>
<dbReference type="SMART" id="SM00849">
    <property type="entry name" value="Lactamase_B"/>
    <property type="match status" value="1"/>
</dbReference>
<dbReference type="SUPFAM" id="SSF56281">
    <property type="entry name" value="Metallo-hydrolase/oxidoreductase"/>
    <property type="match status" value="1"/>
</dbReference>
<dbReference type="PROSITE" id="PS01292">
    <property type="entry name" value="UPF0036"/>
    <property type="match status" value="1"/>
</dbReference>